<feature type="chain" id="PRO_0000087370" description="Cell division protein FtsL">
    <location>
        <begin position="1"/>
        <end position="83"/>
    </location>
</feature>
<feature type="topological domain" description="Cytoplasmic" evidence="2">
    <location>
        <begin position="1"/>
        <end position="20"/>
    </location>
</feature>
<feature type="transmembrane region" description="Helical" evidence="2">
    <location>
        <begin position="21"/>
        <end position="41"/>
    </location>
</feature>
<feature type="topological domain" description="Extracellular" evidence="2">
    <location>
        <begin position="42"/>
        <end position="83"/>
    </location>
</feature>
<accession>Q89AP9</accession>
<sequence>MNKNYNLSKIIFNDLISFYKTQLILIFMIFISALLIITIIHKTRLLTSQQEELDIIKKKQMPLNLEKYISTSRLKFKHEKIDT</sequence>
<proteinExistence type="inferred from homology"/>
<dbReference type="EMBL" id="AE016826">
    <property type="protein sequence ID" value="AAO26937.1"/>
    <property type="molecule type" value="Genomic_DNA"/>
</dbReference>
<dbReference type="RefSeq" id="WP_011091338.1">
    <property type="nucleotide sequence ID" value="NC_004545.1"/>
</dbReference>
<dbReference type="SMR" id="Q89AP9"/>
<dbReference type="STRING" id="224915.bbp_205"/>
<dbReference type="KEGG" id="bab:bbp_205"/>
<dbReference type="HOGENOM" id="CLU_2536029_0_0_6"/>
<dbReference type="Proteomes" id="UP000000601">
    <property type="component" value="Chromosome"/>
</dbReference>
<dbReference type="GO" id="GO:0005886">
    <property type="term" value="C:plasma membrane"/>
    <property type="evidence" value="ECO:0007669"/>
    <property type="project" value="UniProtKB-SubCell"/>
</dbReference>
<dbReference type="GO" id="GO:0051301">
    <property type="term" value="P:cell division"/>
    <property type="evidence" value="ECO:0007669"/>
    <property type="project" value="UniProtKB-KW"/>
</dbReference>
<dbReference type="InterPro" id="IPR011922">
    <property type="entry name" value="Cell_div_FtsL"/>
</dbReference>
<dbReference type="Pfam" id="PF04999">
    <property type="entry name" value="FtsL"/>
    <property type="match status" value="1"/>
</dbReference>
<name>FTSL_BUCBP</name>
<protein>
    <recommendedName>
        <fullName>Cell division protein FtsL</fullName>
    </recommendedName>
</protein>
<evidence type="ECO:0000250" key="1"/>
<evidence type="ECO:0000255" key="2"/>
<evidence type="ECO:0000305" key="3"/>
<gene>
    <name type="primary">ftsL</name>
    <name type="ordered locus">bbp_205</name>
</gene>
<keyword id="KW-0131">Cell cycle</keyword>
<keyword id="KW-0132">Cell division</keyword>
<keyword id="KW-1003">Cell membrane</keyword>
<keyword id="KW-0472">Membrane</keyword>
<keyword id="KW-1185">Reference proteome</keyword>
<keyword id="KW-0812">Transmembrane</keyword>
<keyword id="KW-1133">Transmembrane helix</keyword>
<comment type="function">
    <text evidence="1">Essential cell division protein.</text>
</comment>
<comment type="subcellular location">
    <subcellularLocation>
        <location evidence="1">Cell membrane</location>
        <topology evidence="1">Single-pass type II membrane protein</topology>
    </subcellularLocation>
    <text evidence="1">Localizes to the division septum where it forms a ring structure.</text>
</comment>
<comment type="similarity">
    <text evidence="3">Belongs to the FtsL family.</text>
</comment>
<organism>
    <name type="scientific">Buchnera aphidicola subsp. Baizongia pistaciae (strain Bp)</name>
    <dbReference type="NCBI Taxonomy" id="224915"/>
    <lineage>
        <taxon>Bacteria</taxon>
        <taxon>Pseudomonadati</taxon>
        <taxon>Pseudomonadota</taxon>
        <taxon>Gammaproteobacteria</taxon>
        <taxon>Enterobacterales</taxon>
        <taxon>Erwiniaceae</taxon>
        <taxon>Buchnera</taxon>
    </lineage>
</organism>
<reference key="1">
    <citation type="journal article" date="2003" name="Proc. Natl. Acad. Sci. U.S.A.">
        <title>Reductive genome evolution in Buchnera aphidicola.</title>
        <authorList>
            <person name="van Ham R.C.H.J."/>
            <person name="Kamerbeek J."/>
            <person name="Palacios C."/>
            <person name="Rausell C."/>
            <person name="Abascal F."/>
            <person name="Bastolla U."/>
            <person name="Fernandez J.M."/>
            <person name="Jimenez L."/>
            <person name="Postigo M."/>
            <person name="Silva F.J."/>
            <person name="Tamames J."/>
            <person name="Viguera E."/>
            <person name="Latorre A."/>
            <person name="Valencia A."/>
            <person name="Moran F."/>
            <person name="Moya A."/>
        </authorList>
    </citation>
    <scope>NUCLEOTIDE SEQUENCE [LARGE SCALE GENOMIC DNA]</scope>
    <source>
        <strain>Bp</strain>
    </source>
</reference>